<geneLocation type="chloroplast"/>
<gene>
    <name evidence="1" type="primary">rbcL</name>
</gene>
<comment type="function">
    <text evidence="1">RuBisCO catalyzes two reactions: the carboxylation of D-ribulose 1,5-bisphosphate, the primary event in carbon dioxide fixation, as well as the oxidative fragmentation of the pentose substrate in the photorespiration process. Both reactions occur simultaneously and in competition at the same active site.</text>
</comment>
<comment type="catalytic activity">
    <reaction evidence="1">
        <text>2 (2R)-3-phosphoglycerate + 2 H(+) = D-ribulose 1,5-bisphosphate + CO2 + H2O</text>
        <dbReference type="Rhea" id="RHEA:23124"/>
        <dbReference type="ChEBI" id="CHEBI:15377"/>
        <dbReference type="ChEBI" id="CHEBI:15378"/>
        <dbReference type="ChEBI" id="CHEBI:16526"/>
        <dbReference type="ChEBI" id="CHEBI:57870"/>
        <dbReference type="ChEBI" id="CHEBI:58272"/>
        <dbReference type="EC" id="4.1.1.39"/>
    </reaction>
</comment>
<comment type="catalytic activity">
    <reaction evidence="1">
        <text>D-ribulose 1,5-bisphosphate + O2 = 2-phosphoglycolate + (2R)-3-phosphoglycerate + 2 H(+)</text>
        <dbReference type="Rhea" id="RHEA:36631"/>
        <dbReference type="ChEBI" id="CHEBI:15378"/>
        <dbReference type="ChEBI" id="CHEBI:15379"/>
        <dbReference type="ChEBI" id="CHEBI:57870"/>
        <dbReference type="ChEBI" id="CHEBI:58033"/>
        <dbReference type="ChEBI" id="CHEBI:58272"/>
    </reaction>
</comment>
<comment type="cofactor">
    <cofactor evidence="1">
        <name>Mg(2+)</name>
        <dbReference type="ChEBI" id="CHEBI:18420"/>
    </cofactor>
    <text evidence="1">Binds 1 Mg(2+) ion per subunit.</text>
</comment>
<comment type="subunit">
    <text evidence="1">Heterohexadecamer of 8 large chains and 8 small chains; disulfide-linked. The disulfide link is formed within the large subunit homodimers.</text>
</comment>
<comment type="subcellular location">
    <subcellularLocation>
        <location>Plastid</location>
        <location>Chloroplast</location>
    </subcellularLocation>
</comment>
<comment type="PTM">
    <text evidence="1">The disulfide bond which can form in the large chain dimeric partners within the hexadecamer appears to be associated with oxidative stress and protein turnover.</text>
</comment>
<comment type="miscellaneous">
    <text evidence="1">The basic functional RuBisCO is composed of a large chain homodimer in a 'head-to-tail' conformation. In form I RuBisCO this homodimer is arranged in a barrel-like tetramer with the small subunits forming a tetrameric 'cap' on each end of the 'barrel'.</text>
</comment>
<comment type="similarity">
    <text evidence="1">Belongs to the RuBisCO large chain family. Type I subfamily.</text>
</comment>
<proteinExistence type="inferred from homology"/>
<evidence type="ECO:0000255" key="1">
    <source>
        <dbReference type="HAMAP-Rule" id="MF_01338"/>
    </source>
</evidence>
<dbReference type="EC" id="4.1.1.39" evidence="1"/>
<dbReference type="EMBL" id="L01897">
    <property type="protein sequence ID" value="AAC27817.2"/>
    <property type="molecule type" value="Genomic_DNA"/>
</dbReference>
<dbReference type="SMR" id="P28394"/>
<dbReference type="GO" id="GO:0009507">
    <property type="term" value="C:chloroplast"/>
    <property type="evidence" value="ECO:0007669"/>
    <property type="project" value="UniProtKB-SubCell"/>
</dbReference>
<dbReference type="GO" id="GO:0000287">
    <property type="term" value="F:magnesium ion binding"/>
    <property type="evidence" value="ECO:0007669"/>
    <property type="project" value="InterPro"/>
</dbReference>
<dbReference type="GO" id="GO:0004497">
    <property type="term" value="F:monooxygenase activity"/>
    <property type="evidence" value="ECO:0007669"/>
    <property type="project" value="UniProtKB-KW"/>
</dbReference>
<dbReference type="GO" id="GO:0016984">
    <property type="term" value="F:ribulose-bisphosphate carboxylase activity"/>
    <property type="evidence" value="ECO:0007669"/>
    <property type="project" value="UniProtKB-EC"/>
</dbReference>
<dbReference type="GO" id="GO:0009853">
    <property type="term" value="P:photorespiration"/>
    <property type="evidence" value="ECO:0007669"/>
    <property type="project" value="UniProtKB-KW"/>
</dbReference>
<dbReference type="GO" id="GO:0019253">
    <property type="term" value="P:reductive pentose-phosphate cycle"/>
    <property type="evidence" value="ECO:0007669"/>
    <property type="project" value="UniProtKB-KW"/>
</dbReference>
<dbReference type="CDD" id="cd08212">
    <property type="entry name" value="RuBisCO_large_I"/>
    <property type="match status" value="1"/>
</dbReference>
<dbReference type="FunFam" id="3.20.20.110:FF:000001">
    <property type="entry name" value="Ribulose bisphosphate carboxylase large chain"/>
    <property type="match status" value="1"/>
</dbReference>
<dbReference type="FunFam" id="3.30.70.150:FF:000001">
    <property type="entry name" value="Ribulose bisphosphate carboxylase large chain"/>
    <property type="match status" value="1"/>
</dbReference>
<dbReference type="Gene3D" id="3.20.20.110">
    <property type="entry name" value="Ribulose bisphosphate carboxylase, large subunit, C-terminal domain"/>
    <property type="match status" value="1"/>
</dbReference>
<dbReference type="Gene3D" id="3.30.70.150">
    <property type="entry name" value="RuBisCO large subunit, N-terminal domain"/>
    <property type="match status" value="1"/>
</dbReference>
<dbReference type="HAMAP" id="MF_01338">
    <property type="entry name" value="RuBisCO_L_type1"/>
    <property type="match status" value="1"/>
</dbReference>
<dbReference type="InterPro" id="IPR033966">
    <property type="entry name" value="RuBisCO"/>
</dbReference>
<dbReference type="InterPro" id="IPR020878">
    <property type="entry name" value="RuBisCo_large_chain_AS"/>
</dbReference>
<dbReference type="InterPro" id="IPR000685">
    <property type="entry name" value="RuBisCO_lsu_C"/>
</dbReference>
<dbReference type="InterPro" id="IPR036376">
    <property type="entry name" value="RuBisCO_lsu_C_sf"/>
</dbReference>
<dbReference type="InterPro" id="IPR017443">
    <property type="entry name" value="RuBisCO_lsu_fd_N"/>
</dbReference>
<dbReference type="InterPro" id="IPR036422">
    <property type="entry name" value="RuBisCO_lsu_N_sf"/>
</dbReference>
<dbReference type="InterPro" id="IPR020888">
    <property type="entry name" value="RuBisCO_lsuI"/>
</dbReference>
<dbReference type="NCBIfam" id="NF003252">
    <property type="entry name" value="PRK04208.1"/>
    <property type="match status" value="1"/>
</dbReference>
<dbReference type="PANTHER" id="PTHR42704">
    <property type="entry name" value="RIBULOSE BISPHOSPHATE CARBOXYLASE"/>
    <property type="match status" value="1"/>
</dbReference>
<dbReference type="PANTHER" id="PTHR42704:SF15">
    <property type="entry name" value="RIBULOSE BISPHOSPHATE CARBOXYLASE LARGE CHAIN"/>
    <property type="match status" value="1"/>
</dbReference>
<dbReference type="Pfam" id="PF00016">
    <property type="entry name" value="RuBisCO_large"/>
    <property type="match status" value="1"/>
</dbReference>
<dbReference type="Pfam" id="PF02788">
    <property type="entry name" value="RuBisCO_large_N"/>
    <property type="match status" value="1"/>
</dbReference>
<dbReference type="SFLD" id="SFLDG01052">
    <property type="entry name" value="RuBisCO"/>
    <property type="match status" value="1"/>
</dbReference>
<dbReference type="SFLD" id="SFLDS00014">
    <property type="entry name" value="RuBisCO"/>
    <property type="match status" value="1"/>
</dbReference>
<dbReference type="SFLD" id="SFLDG00301">
    <property type="entry name" value="RuBisCO-like_proteins"/>
    <property type="match status" value="1"/>
</dbReference>
<dbReference type="SUPFAM" id="SSF51649">
    <property type="entry name" value="RuBisCo, C-terminal domain"/>
    <property type="match status" value="1"/>
</dbReference>
<dbReference type="SUPFAM" id="SSF54966">
    <property type="entry name" value="RuBisCO, large subunit, small (N-terminal) domain"/>
    <property type="match status" value="1"/>
</dbReference>
<dbReference type="PROSITE" id="PS00157">
    <property type="entry name" value="RUBISCO_LARGE"/>
    <property type="match status" value="1"/>
</dbReference>
<name>RBL_CORMY</name>
<keyword id="KW-0113">Calvin cycle</keyword>
<keyword id="KW-0120">Carbon dioxide fixation</keyword>
<keyword id="KW-0150">Chloroplast</keyword>
<keyword id="KW-1015">Disulfide bond</keyword>
<keyword id="KW-0456">Lyase</keyword>
<keyword id="KW-0460">Magnesium</keyword>
<keyword id="KW-0479">Metal-binding</keyword>
<keyword id="KW-0488">Methylation</keyword>
<keyword id="KW-0503">Monooxygenase</keyword>
<keyword id="KW-0560">Oxidoreductase</keyword>
<keyword id="KW-0601">Photorespiration</keyword>
<keyword id="KW-0602">Photosynthesis</keyword>
<keyword id="KW-0934">Plastid</keyword>
<sequence>GVGFKAGVKDYKLTYYTPEYETKDTDILAAFRVTPQPGVPPEEAGAAVAAESSTGTWTTVWTDGLTSLDRYKGRCYQIEPVAGEENQYIAYVAYPLDLFEEGSVTNMFTSIVGNVFGFKALRALRLEDLRIPPAYVKTFQGPPHGIQVERDKLNKYGRPLLGCTIKPKLGLSAKNYGRAVYECLRGGLDFTKDDENVNSQPFMRWRDRFLFCAEAIYKSQAETGEIKGHYLNATAGTCEEMIKRAVFARELGVPIVMHDYLTGGFTANTSLAHYCRDNGLLLHIHRAMHAVIDRQKNHGIHFRVLAKALRMSGGDHIHAGTVVGKLEGEREITLGFVDLLRDDFIEKDRSRGIYFTQDWVSLPGVLPVASGGIHVWHMPALTEIFGDDSVLQFGGGTLGHPWGNAPGAVANRVALEACVQARNEGRDLAREGNEIIREASKWSPELAAACEVWKEIKFEFEAMDTL</sequence>
<organism>
    <name type="scientific">Coriaria myrtifolia</name>
    <name type="common">Tanner's sumac</name>
    <dbReference type="NCBI Taxonomy" id="3460"/>
    <lineage>
        <taxon>Eukaryota</taxon>
        <taxon>Viridiplantae</taxon>
        <taxon>Streptophyta</taxon>
        <taxon>Embryophyta</taxon>
        <taxon>Tracheophyta</taxon>
        <taxon>Spermatophyta</taxon>
        <taxon>Magnoliopsida</taxon>
        <taxon>eudicotyledons</taxon>
        <taxon>Gunneridae</taxon>
        <taxon>Pentapetalae</taxon>
        <taxon>rosids</taxon>
        <taxon>fabids</taxon>
        <taxon>Cucurbitales</taxon>
        <taxon>Coriariaceae</taxon>
        <taxon>Coriaria</taxon>
    </lineage>
</organism>
<accession>P28394</accession>
<reference key="1">
    <citation type="journal article" date="1992" name="Science">
        <title>Carnivorous plants: phylogeny and structural evolution.</title>
        <authorList>
            <person name="Albert V.A."/>
            <person name="Williams S.E."/>
            <person name="Chase M.W."/>
        </authorList>
    </citation>
    <scope>NUCLEOTIDE SEQUENCE [GENOMIC DNA]</scope>
</reference>
<feature type="chain" id="PRO_0000062420" description="Ribulose bisphosphate carboxylase large chain">
    <location>
        <begin position="1" status="less than"/>
        <end position="466"/>
    </location>
</feature>
<feature type="active site" description="Proton acceptor" evidence="1">
    <location>
        <position position="166"/>
    </location>
</feature>
<feature type="active site" description="Proton acceptor" evidence="1">
    <location>
        <position position="285"/>
    </location>
</feature>
<feature type="binding site" description="in homodimeric partner" evidence="1">
    <location>
        <position position="114"/>
    </location>
    <ligand>
        <name>substrate</name>
    </ligand>
</feature>
<feature type="binding site" evidence="1">
    <location>
        <position position="164"/>
    </location>
    <ligand>
        <name>substrate</name>
    </ligand>
</feature>
<feature type="binding site" evidence="1">
    <location>
        <position position="168"/>
    </location>
    <ligand>
        <name>substrate</name>
    </ligand>
</feature>
<feature type="binding site" description="via carbamate group" evidence="1">
    <location>
        <position position="192"/>
    </location>
    <ligand>
        <name>Mg(2+)</name>
        <dbReference type="ChEBI" id="CHEBI:18420"/>
    </ligand>
</feature>
<feature type="binding site" evidence="1">
    <location>
        <position position="194"/>
    </location>
    <ligand>
        <name>Mg(2+)</name>
        <dbReference type="ChEBI" id="CHEBI:18420"/>
    </ligand>
</feature>
<feature type="binding site" evidence="1">
    <location>
        <position position="195"/>
    </location>
    <ligand>
        <name>Mg(2+)</name>
        <dbReference type="ChEBI" id="CHEBI:18420"/>
    </ligand>
</feature>
<feature type="binding site" evidence="1">
    <location>
        <position position="286"/>
    </location>
    <ligand>
        <name>substrate</name>
    </ligand>
</feature>
<feature type="binding site" evidence="1">
    <location>
        <position position="318"/>
    </location>
    <ligand>
        <name>substrate</name>
    </ligand>
</feature>
<feature type="binding site" evidence="1">
    <location>
        <position position="370"/>
    </location>
    <ligand>
        <name>substrate</name>
    </ligand>
</feature>
<feature type="site" description="Transition state stabilizer" evidence="1">
    <location>
        <position position="325"/>
    </location>
</feature>
<feature type="modified residue" description="N6,N6,N6-trimethyllysine" evidence="1">
    <location>
        <position position="5"/>
    </location>
</feature>
<feature type="modified residue" description="N6-carboxylysine" evidence="1">
    <location>
        <position position="192"/>
    </location>
</feature>
<feature type="disulfide bond" description="Interchain; in linked form" evidence="1">
    <location>
        <position position="238"/>
    </location>
</feature>
<feature type="non-terminal residue">
    <location>
        <position position="1"/>
    </location>
</feature>
<protein>
    <recommendedName>
        <fullName evidence="1">Ribulose bisphosphate carboxylase large chain</fullName>
        <shortName evidence="1">RuBisCO large subunit</shortName>
        <ecNumber evidence="1">4.1.1.39</ecNumber>
    </recommendedName>
</protein>